<comment type="function">
    <text evidence="3 4 5 6">Associated subunit of mTORC2, which regulates cell growth and survival in response to hormonal signals (PubMed:17461779, PubMed:17599906, PubMed:29424687). mTORC2 is activated by growth factors, but, in contrast to mTORC1, seems to be nutrient-insensitive (PubMed:17461779, PubMed:17599906, PubMed:29424687). mTORC2 seems to function upstream of Rho GTPases to regulate the actin cytoskeleton, probably by activating one or more Rho-type guanine nucleotide exchange factors (PubMed:17461779, PubMed:17599906, PubMed:29424687). PRR5 plays an important role in regulation of PDGFRB expression and in modulation of platelet-derived growth factor signaling (PubMed:17599906). May act as a tumor suppressor in breast cancer (PubMed:15718101).</text>
</comment>
<comment type="subunit">
    <text evidence="4 5 6">Associated component of the mechanistic target of rapamycin complex 2 (mTORC2) (PubMed:17461779, PubMed:17599906, PubMed:29424687). Binds directly to MTOR and RICTOR within the TORC2 complex (PubMed:17461779, PubMed:17599906).</text>
</comment>
<comment type="interaction">
    <interactant intactId="EBI-1387467">
        <id>P85299</id>
    </interactant>
    <interactant intactId="EBI-357481">
        <id>Q12959</id>
        <label>DLG1</label>
    </interactant>
    <organismsDiffer>false</organismsDiffer>
    <experiments>2</experiments>
</comment>
<comment type="interaction">
    <interactant intactId="EBI-1387467">
        <id>P85299</id>
    </interactant>
    <interactant intactId="EBI-306940">
        <id>Q04917</id>
        <label>YWHAH</label>
    </interactant>
    <organismsDiffer>false</organismsDiffer>
    <experiments>3</experiments>
</comment>
<comment type="interaction">
    <interactant intactId="EBI-12944296">
        <id>P85299-2</id>
    </interactant>
    <interactant intactId="EBI-11962928">
        <id>Q9UI47-2</id>
        <label>CTNNA3</label>
    </interactant>
    <organismsDiffer>false</organismsDiffer>
    <experiments>3</experiments>
</comment>
<comment type="interaction">
    <interactant intactId="EBI-12944296">
        <id>P85299-2</id>
    </interactant>
    <interactant intactId="EBI-2806959">
        <id>Q6ICB0</id>
        <label>DESI1</label>
    </interactant>
    <organismsDiffer>false</organismsDiffer>
    <experiments>3</experiments>
</comment>
<comment type="interaction">
    <interactant intactId="EBI-12944296">
        <id>P85299-2</id>
    </interactant>
    <interactant intactId="EBI-347538">
        <id>Q9Y4H4</id>
        <label>GPSM3</label>
    </interactant>
    <organismsDiffer>false</organismsDiffer>
    <experiments>3</experiments>
</comment>
<comment type="interaction">
    <interactant intactId="EBI-12944296">
        <id>P85299-2</id>
    </interactant>
    <interactant intactId="EBI-740220">
        <id>O14964</id>
        <label>HGS</label>
    </interactant>
    <organismsDiffer>false</organismsDiffer>
    <experiments>3</experiments>
</comment>
<comment type="interaction">
    <interactant intactId="EBI-12944296">
        <id>P85299-2</id>
    </interactant>
    <interactant intactId="EBI-739895">
        <id>Q8N6Y0</id>
        <label>USHBP1</label>
    </interactant>
    <organismsDiffer>false</organismsDiffer>
    <experiments>3</experiments>
</comment>
<comment type="alternative products">
    <event type="alternative splicing"/>
    <isoform>
        <id>P85299-1</id>
        <id>Q9NSG0-5</id>
        <name>1</name>
        <name>alpha</name>
        <sequence type="displayed"/>
    </isoform>
    <isoform>
        <id>P85299-2</id>
        <id>Q9NSG0-8</id>
        <name>2</name>
        <sequence type="described" ref="VSP_001646 VSP_001648"/>
    </isoform>
    <isoform>
        <id>P85299-3</id>
        <name>3</name>
        <name>beta</name>
        <sequence type="described" ref="VSP_028885"/>
    </isoform>
    <isoform>
        <id>P85299-4</id>
        <name>4</name>
        <name>gamma</name>
        <sequence type="described" ref="VSP_028884"/>
    </isoform>
    <isoform>
        <id>P85299-5</id>
        <name>5</name>
        <sequence type="described" ref="VSP_045883"/>
    </isoform>
</comment>
<comment type="tissue specificity">
    <text evidence="3 5">Most abundant in kidney and liver. Also highly expressed in brain, spleen, testis and placenta. Overexpressed in several colorectal tumors.</text>
</comment>
<comment type="similarity">
    <text evidence="9">Belongs to the PROTOR family.</text>
</comment>
<protein>
    <recommendedName>
        <fullName>Proline-rich protein 5</fullName>
    </recommendedName>
    <alternativeName>
        <fullName>Protein observed with Rictor-1</fullName>
        <shortName>Protor-1</shortName>
    </alternativeName>
</protein>
<gene>
    <name type="primary">PRR5</name>
    <name type="synonym">PROTOR1</name>
    <name type="ORF">PP610</name>
</gene>
<evidence type="ECO:0000250" key="1">
    <source>
        <dbReference type="UniProtKB" id="Q812A5"/>
    </source>
</evidence>
<evidence type="ECO:0000256" key="2">
    <source>
        <dbReference type="SAM" id="MobiDB-lite"/>
    </source>
</evidence>
<evidence type="ECO:0000269" key="3">
    <source>
    </source>
</evidence>
<evidence type="ECO:0000269" key="4">
    <source>
    </source>
</evidence>
<evidence type="ECO:0000269" key="5">
    <source>
    </source>
</evidence>
<evidence type="ECO:0000269" key="6">
    <source>
    </source>
</evidence>
<evidence type="ECO:0000303" key="7">
    <source>
    </source>
</evidence>
<evidence type="ECO:0000303" key="8">
    <source>
    </source>
</evidence>
<evidence type="ECO:0000305" key="9"/>
<dbReference type="EMBL" id="AK000192">
    <property type="protein sequence ID" value="BAA90999.1"/>
    <property type="molecule type" value="mRNA"/>
</dbReference>
<dbReference type="EMBL" id="AK055848">
    <property type="protein sequence ID" value="BAG51585.1"/>
    <property type="molecule type" value="mRNA"/>
</dbReference>
<dbReference type="EMBL" id="AF177331">
    <property type="protein sequence ID" value="AAG17975.1"/>
    <property type="molecule type" value="mRNA"/>
</dbReference>
<dbReference type="EMBL" id="Z93244">
    <property type="status" value="NOT_ANNOTATED_CDS"/>
    <property type="molecule type" value="Genomic_DNA"/>
</dbReference>
<dbReference type="EMBL" id="Z98743">
    <property type="status" value="NOT_ANNOTATED_CDS"/>
    <property type="molecule type" value="Genomic_DNA"/>
</dbReference>
<dbReference type="EMBL" id="CH471138">
    <property type="protein sequence ID" value="EAW73353.1"/>
    <property type="molecule type" value="Genomic_DNA"/>
</dbReference>
<dbReference type="EMBL" id="CH471138">
    <property type="protein sequence ID" value="EAW73355.1"/>
    <property type="molecule type" value="Genomic_DNA"/>
</dbReference>
<dbReference type="EMBL" id="BC016921">
    <property type="protein sequence ID" value="AAH16921.1"/>
    <property type="molecule type" value="mRNA"/>
</dbReference>
<dbReference type="EMBL" id="BK005635">
    <property type="protein sequence ID" value="DAA05654.1"/>
    <property type="molecule type" value="mRNA"/>
</dbReference>
<dbReference type="EMBL" id="BK005636">
    <property type="protein sequence ID" value="DAA05655.1"/>
    <property type="molecule type" value="mRNA"/>
</dbReference>
<dbReference type="EMBL" id="BK005637">
    <property type="protein sequence ID" value="DAA05656.1"/>
    <property type="molecule type" value="mRNA"/>
</dbReference>
<dbReference type="EMBL" id="BK005638">
    <property type="protein sequence ID" value="DAA05657.1"/>
    <property type="molecule type" value="mRNA"/>
</dbReference>
<dbReference type="EMBL" id="BK005639">
    <property type="protein sequence ID" value="DAA05658.1"/>
    <property type="molecule type" value="mRNA"/>
</dbReference>
<dbReference type="CCDS" id="CCDS14058.1"/>
<dbReference type="CCDS" id="CCDS14059.1">
    <molecule id="P85299-3"/>
</dbReference>
<dbReference type="CCDS" id="CCDS56232.1">
    <molecule id="P85299-5"/>
</dbReference>
<dbReference type="CCDS" id="CCDS74875.1">
    <molecule id="P85299-4"/>
</dbReference>
<dbReference type="RefSeq" id="NP_001017528.1">
    <molecule id="P85299-3"/>
    <property type="nucleotide sequence ID" value="NM_001017528.3"/>
</dbReference>
<dbReference type="RefSeq" id="NP_001017529.1">
    <molecule id="P85299-4"/>
    <property type="nucleotide sequence ID" value="NM_001017529.3"/>
</dbReference>
<dbReference type="RefSeq" id="NP_001017530.1">
    <molecule id="P85299-4"/>
    <property type="nucleotide sequence ID" value="NM_001017530.2"/>
</dbReference>
<dbReference type="RefSeq" id="NP_001185650.1">
    <molecule id="P85299-5"/>
    <property type="nucleotide sequence ID" value="NM_001198721.2"/>
</dbReference>
<dbReference type="RefSeq" id="NP_056181.2">
    <molecule id="P85299-3"/>
    <property type="nucleotide sequence ID" value="NM_015366.3"/>
</dbReference>
<dbReference type="RefSeq" id="NP_851850.1">
    <molecule id="P85299-1"/>
    <property type="nucleotide sequence ID" value="NM_181333.4"/>
</dbReference>
<dbReference type="SMR" id="P85299"/>
<dbReference type="BioGRID" id="120755">
    <property type="interactions" value="44"/>
</dbReference>
<dbReference type="ComplexPortal" id="CPX-4402">
    <property type="entry name" value="mTORC2 complex"/>
</dbReference>
<dbReference type="CORUM" id="P85299"/>
<dbReference type="FunCoup" id="P85299">
    <property type="interactions" value="305"/>
</dbReference>
<dbReference type="IntAct" id="P85299">
    <property type="interactions" value="30"/>
</dbReference>
<dbReference type="MINT" id="P85299"/>
<dbReference type="STRING" id="9606.ENSP00000384848"/>
<dbReference type="GlyGen" id="P85299">
    <property type="glycosylation" value="1 site, 1 O-linked glycan (1 site)"/>
</dbReference>
<dbReference type="iPTMnet" id="P85299"/>
<dbReference type="PhosphoSitePlus" id="P85299"/>
<dbReference type="BioMuta" id="PRR5"/>
<dbReference type="DMDM" id="160016058"/>
<dbReference type="jPOST" id="P85299"/>
<dbReference type="MassIVE" id="P85299"/>
<dbReference type="PaxDb" id="9606-ENSP00000384848"/>
<dbReference type="PeptideAtlas" id="P85299"/>
<dbReference type="ProteomicsDB" id="2938"/>
<dbReference type="ProteomicsDB" id="57768"/>
<dbReference type="ProteomicsDB" id="57769">
    <molecule id="P85299-2"/>
</dbReference>
<dbReference type="ProteomicsDB" id="57770">
    <molecule id="P85299-3"/>
</dbReference>
<dbReference type="ProteomicsDB" id="57771">
    <molecule id="P85299-4"/>
</dbReference>
<dbReference type="Antibodypedia" id="46008">
    <property type="antibodies" value="189 antibodies from 31 providers"/>
</dbReference>
<dbReference type="DNASU" id="55615"/>
<dbReference type="Ensembl" id="ENST00000006251.11">
    <molecule id="P85299-3"/>
    <property type="protein sequence ID" value="ENSP00000006251.7"/>
    <property type="gene ID" value="ENSG00000186654.22"/>
</dbReference>
<dbReference type="Ensembl" id="ENST00000336985.11">
    <molecule id="P85299-1"/>
    <property type="protein sequence ID" value="ENSP00000337464.6"/>
    <property type="gene ID" value="ENSG00000186654.22"/>
</dbReference>
<dbReference type="Ensembl" id="ENST00000403581.5">
    <molecule id="P85299-5"/>
    <property type="protein sequence ID" value="ENSP00000384848.1"/>
    <property type="gene ID" value="ENSG00000186654.22"/>
</dbReference>
<dbReference type="Ensembl" id="ENST00000432186.6">
    <molecule id="P85299-3"/>
    <property type="protein sequence ID" value="ENSP00000400925.2"/>
    <property type="gene ID" value="ENSG00000186654.22"/>
</dbReference>
<dbReference type="Ensembl" id="ENST00000492475.6">
    <molecule id="P85299-4"/>
    <property type="protein sequence ID" value="ENSP00000520433.1"/>
    <property type="gene ID" value="ENSG00000186654.22"/>
</dbReference>
<dbReference type="Ensembl" id="ENST00000617066.4">
    <molecule id="P85299-4"/>
    <property type="protein sequence ID" value="ENSP00000479623.1"/>
    <property type="gene ID" value="ENSG00000186654.22"/>
</dbReference>
<dbReference type="GeneID" id="55615"/>
<dbReference type="KEGG" id="hsa:55615"/>
<dbReference type="MANE-Select" id="ENST00000336985.11">
    <property type="protein sequence ID" value="ENSP00000337464.6"/>
    <property type="RefSeq nucleotide sequence ID" value="NM_181333.4"/>
    <property type="RefSeq protein sequence ID" value="NP_851850.1"/>
</dbReference>
<dbReference type="UCSC" id="uc003bew.2">
    <property type="organism name" value="human"/>
</dbReference>
<dbReference type="AGR" id="HGNC:31682"/>
<dbReference type="CTD" id="55615"/>
<dbReference type="DisGeNET" id="55615"/>
<dbReference type="GeneCards" id="PRR5"/>
<dbReference type="HGNC" id="HGNC:31682">
    <property type="gene designation" value="PRR5"/>
</dbReference>
<dbReference type="HPA" id="ENSG00000186654">
    <property type="expression patterns" value="Low tissue specificity"/>
</dbReference>
<dbReference type="MIM" id="609406">
    <property type="type" value="gene"/>
</dbReference>
<dbReference type="neXtProt" id="NX_P85299"/>
<dbReference type="OpenTargets" id="ENSG00000186654"/>
<dbReference type="PharmGKB" id="PA144596392"/>
<dbReference type="VEuPathDB" id="HostDB:ENSG00000186654"/>
<dbReference type="eggNOG" id="KOG4406">
    <property type="taxonomic scope" value="Eukaryota"/>
</dbReference>
<dbReference type="GeneTree" id="ENSGT00530000063981"/>
<dbReference type="HOGENOM" id="CLU_046146_0_0_1"/>
<dbReference type="InParanoid" id="P85299"/>
<dbReference type="OMA" id="HSVCEMS"/>
<dbReference type="OrthoDB" id="2290221at2759"/>
<dbReference type="PAN-GO" id="P85299">
    <property type="GO annotations" value="2 GO annotations based on evolutionary models"/>
</dbReference>
<dbReference type="PhylomeDB" id="P85299"/>
<dbReference type="TreeFam" id="TF314826"/>
<dbReference type="PathwayCommons" id="P85299"/>
<dbReference type="Reactome" id="R-HSA-1257604">
    <property type="pathway name" value="PIP3 activates AKT signaling"/>
</dbReference>
<dbReference type="Reactome" id="R-HSA-389357">
    <property type="pathway name" value="CD28 dependent PI3K/Akt signaling"/>
</dbReference>
<dbReference type="Reactome" id="R-HSA-5218920">
    <property type="pathway name" value="VEGFR2 mediated vascular permeability"/>
</dbReference>
<dbReference type="Reactome" id="R-HSA-5674400">
    <property type="pathway name" value="Constitutive Signaling by AKT1 E17K in Cancer"/>
</dbReference>
<dbReference type="Reactome" id="R-HSA-6804757">
    <property type="pathway name" value="Regulation of TP53 Degradation"/>
</dbReference>
<dbReference type="Reactome" id="R-HSA-9856530">
    <property type="pathway name" value="High laminar flow shear stress activates signaling by PIEZO1 and PECAM1:CDH5:KDR in endothelial cells"/>
</dbReference>
<dbReference type="SignaLink" id="P85299"/>
<dbReference type="SIGNOR" id="P85299"/>
<dbReference type="BioGRID-ORCS" id="55615">
    <property type="hits" value="12 hits in 1149 CRISPR screens"/>
</dbReference>
<dbReference type="ChiTaRS" id="PRR5">
    <property type="organism name" value="human"/>
</dbReference>
<dbReference type="GenomeRNAi" id="55615"/>
<dbReference type="Pharos" id="P85299">
    <property type="development level" value="Tbio"/>
</dbReference>
<dbReference type="PRO" id="PR:P85299"/>
<dbReference type="Proteomes" id="UP000005640">
    <property type="component" value="Chromosome 22"/>
</dbReference>
<dbReference type="RNAct" id="P85299">
    <property type="molecule type" value="protein"/>
</dbReference>
<dbReference type="Bgee" id="ENSG00000186654">
    <property type="expression patterns" value="Expressed in spleen and 159 other cell types or tissues"/>
</dbReference>
<dbReference type="ExpressionAtlas" id="P85299">
    <property type="expression patterns" value="baseline and differential"/>
</dbReference>
<dbReference type="GO" id="GO:0005829">
    <property type="term" value="C:cytosol"/>
    <property type="evidence" value="ECO:0000304"/>
    <property type="project" value="Reactome"/>
</dbReference>
<dbReference type="GO" id="GO:0031932">
    <property type="term" value="C:TORC2 complex"/>
    <property type="evidence" value="ECO:0000314"/>
    <property type="project" value="UniProtKB"/>
</dbReference>
<dbReference type="GO" id="GO:0031669">
    <property type="term" value="P:cellular response to nutrient levels"/>
    <property type="evidence" value="ECO:0000303"/>
    <property type="project" value="ComplexPortal"/>
</dbReference>
<dbReference type="GO" id="GO:0007010">
    <property type="term" value="P:cytoskeleton organization"/>
    <property type="evidence" value="ECO:0000303"/>
    <property type="project" value="ComplexPortal"/>
</dbReference>
<dbReference type="GO" id="GO:0043066">
    <property type="term" value="P:negative regulation of apoptotic process"/>
    <property type="evidence" value="ECO:0000303"/>
    <property type="project" value="ComplexPortal"/>
</dbReference>
<dbReference type="GO" id="GO:0043491">
    <property type="term" value="P:phosphatidylinositol 3-kinase/protein kinase B signal transduction"/>
    <property type="evidence" value="ECO:0007669"/>
    <property type="project" value="Ensembl"/>
</dbReference>
<dbReference type="GO" id="GO:0030307">
    <property type="term" value="P:positive regulation of cell growth"/>
    <property type="evidence" value="ECO:0000303"/>
    <property type="project" value="ComplexPortal"/>
</dbReference>
<dbReference type="GO" id="GO:0051897">
    <property type="term" value="P:positive regulation of phosphatidylinositol 3-kinase/protein kinase B signal transduction"/>
    <property type="evidence" value="ECO:0007669"/>
    <property type="project" value="Ensembl"/>
</dbReference>
<dbReference type="GO" id="GO:0038203">
    <property type="term" value="P:TORC2 signaling"/>
    <property type="evidence" value="ECO:0000318"/>
    <property type="project" value="GO_Central"/>
</dbReference>
<dbReference type="InterPro" id="IPR013745">
    <property type="entry name" value="Bit61/PRR5"/>
</dbReference>
<dbReference type="InterPro" id="IPR016159">
    <property type="entry name" value="Cullin_repeat-like_dom_sf"/>
</dbReference>
<dbReference type="PANTHER" id="PTHR32428:SF4">
    <property type="entry name" value="PROLINE-RICH PROTEIN 5"/>
    <property type="match status" value="1"/>
</dbReference>
<dbReference type="PANTHER" id="PTHR32428">
    <property type="entry name" value="TARGET OF RAPAMYCIN COMPLEX 2 SUBUNIT BIT61-RELATED"/>
    <property type="match status" value="1"/>
</dbReference>
<dbReference type="Pfam" id="PF08539">
    <property type="entry name" value="HbrB"/>
    <property type="match status" value="1"/>
</dbReference>
<dbReference type="SUPFAM" id="SSF74788">
    <property type="entry name" value="Cullin repeat-like"/>
    <property type="match status" value="1"/>
</dbReference>
<reference key="1">
    <citation type="journal article" date="2004" name="Nat. Genet.">
        <title>Complete sequencing and characterization of 21,243 full-length human cDNAs.</title>
        <authorList>
            <person name="Ota T."/>
            <person name="Suzuki Y."/>
            <person name="Nishikawa T."/>
            <person name="Otsuki T."/>
            <person name="Sugiyama T."/>
            <person name="Irie R."/>
            <person name="Wakamatsu A."/>
            <person name="Hayashi K."/>
            <person name="Sato H."/>
            <person name="Nagai K."/>
            <person name="Kimura K."/>
            <person name="Makita H."/>
            <person name="Sekine M."/>
            <person name="Obayashi M."/>
            <person name="Nishi T."/>
            <person name="Shibahara T."/>
            <person name="Tanaka T."/>
            <person name="Ishii S."/>
            <person name="Yamamoto J."/>
            <person name="Saito K."/>
            <person name="Kawai Y."/>
            <person name="Isono Y."/>
            <person name="Nakamura Y."/>
            <person name="Nagahari K."/>
            <person name="Murakami K."/>
            <person name="Yasuda T."/>
            <person name="Iwayanagi T."/>
            <person name="Wagatsuma M."/>
            <person name="Shiratori A."/>
            <person name="Sudo H."/>
            <person name="Hosoiri T."/>
            <person name="Kaku Y."/>
            <person name="Kodaira H."/>
            <person name="Kondo H."/>
            <person name="Sugawara M."/>
            <person name="Takahashi M."/>
            <person name="Kanda K."/>
            <person name="Yokoi T."/>
            <person name="Furuya T."/>
            <person name="Kikkawa E."/>
            <person name="Omura Y."/>
            <person name="Abe K."/>
            <person name="Kamihara K."/>
            <person name="Katsuta N."/>
            <person name="Sato K."/>
            <person name="Tanikawa M."/>
            <person name="Yamazaki M."/>
            <person name="Ninomiya K."/>
            <person name="Ishibashi T."/>
            <person name="Yamashita H."/>
            <person name="Murakawa K."/>
            <person name="Fujimori K."/>
            <person name="Tanai H."/>
            <person name="Kimata M."/>
            <person name="Watanabe M."/>
            <person name="Hiraoka S."/>
            <person name="Chiba Y."/>
            <person name="Ishida S."/>
            <person name="Ono Y."/>
            <person name="Takiguchi S."/>
            <person name="Watanabe S."/>
            <person name="Yosida M."/>
            <person name="Hotuta T."/>
            <person name="Kusano J."/>
            <person name="Kanehori K."/>
            <person name="Takahashi-Fujii A."/>
            <person name="Hara H."/>
            <person name="Tanase T.-O."/>
            <person name="Nomura Y."/>
            <person name="Togiya S."/>
            <person name="Komai F."/>
            <person name="Hara R."/>
            <person name="Takeuchi K."/>
            <person name="Arita M."/>
            <person name="Imose N."/>
            <person name="Musashino K."/>
            <person name="Yuuki H."/>
            <person name="Oshima A."/>
            <person name="Sasaki N."/>
            <person name="Aotsuka S."/>
            <person name="Yoshikawa Y."/>
            <person name="Matsunawa H."/>
            <person name="Ichihara T."/>
            <person name="Shiohata N."/>
            <person name="Sano S."/>
            <person name="Moriya S."/>
            <person name="Momiyama H."/>
            <person name="Satoh N."/>
            <person name="Takami S."/>
            <person name="Terashima Y."/>
            <person name="Suzuki O."/>
            <person name="Nakagawa S."/>
            <person name="Senoh A."/>
            <person name="Mizoguchi H."/>
            <person name="Goto Y."/>
            <person name="Shimizu F."/>
            <person name="Wakebe H."/>
            <person name="Hishigaki H."/>
            <person name="Watanabe T."/>
            <person name="Sugiyama A."/>
            <person name="Takemoto M."/>
            <person name="Kawakami B."/>
            <person name="Yamazaki M."/>
            <person name="Watanabe K."/>
            <person name="Kumagai A."/>
            <person name="Itakura S."/>
            <person name="Fukuzumi Y."/>
            <person name="Fujimori Y."/>
            <person name="Komiyama M."/>
            <person name="Tashiro H."/>
            <person name="Tanigami A."/>
            <person name="Fujiwara T."/>
            <person name="Ono T."/>
            <person name="Yamada K."/>
            <person name="Fujii Y."/>
            <person name="Ozaki K."/>
            <person name="Hirao M."/>
            <person name="Ohmori Y."/>
            <person name="Kawabata A."/>
            <person name="Hikiji T."/>
            <person name="Kobatake N."/>
            <person name="Inagaki H."/>
            <person name="Ikema Y."/>
            <person name="Okamoto S."/>
            <person name="Okitani R."/>
            <person name="Kawakami T."/>
            <person name="Noguchi S."/>
            <person name="Itoh T."/>
            <person name="Shigeta K."/>
            <person name="Senba T."/>
            <person name="Matsumura K."/>
            <person name="Nakajima Y."/>
            <person name="Mizuno T."/>
            <person name="Morinaga M."/>
            <person name="Sasaki M."/>
            <person name="Togashi T."/>
            <person name="Oyama M."/>
            <person name="Hata H."/>
            <person name="Watanabe M."/>
            <person name="Komatsu T."/>
            <person name="Mizushima-Sugano J."/>
            <person name="Satoh T."/>
            <person name="Shirai Y."/>
            <person name="Takahashi Y."/>
            <person name="Nakagawa K."/>
            <person name="Okumura K."/>
            <person name="Nagase T."/>
            <person name="Nomura N."/>
            <person name="Kikuchi H."/>
            <person name="Masuho Y."/>
            <person name="Yamashita R."/>
            <person name="Nakai K."/>
            <person name="Yada T."/>
            <person name="Nakamura Y."/>
            <person name="Ohara O."/>
            <person name="Isogai T."/>
            <person name="Sugano S."/>
        </authorList>
    </citation>
    <scope>NUCLEOTIDE SEQUENCE [LARGE SCALE MRNA] (ISOFORMS 2 AND 5)</scope>
    <source>
        <tissue>Colon mucosa</tissue>
        <tissue>Kidney</tissue>
    </source>
</reference>
<reference key="2">
    <citation type="journal article" date="2004" name="Proc. Natl. Acad. Sci. U.S.A.">
        <title>Large-scale cDNA transfection screening for genes related to cancer development and progression.</title>
        <authorList>
            <person name="Wan D."/>
            <person name="Gong Y."/>
            <person name="Qin W."/>
            <person name="Zhang P."/>
            <person name="Li J."/>
            <person name="Wei L."/>
            <person name="Zhou X."/>
            <person name="Li H."/>
            <person name="Qiu X."/>
            <person name="Zhong F."/>
            <person name="He L."/>
            <person name="Yu J."/>
            <person name="Yao G."/>
            <person name="Jiang H."/>
            <person name="Qian L."/>
            <person name="Yu Y."/>
            <person name="Shu H."/>
            <person name="Chen X."/>
            <person name="Xu H."/>
            <person name="Guo M."/>
            <person name="Pan Z."/>
            <person name="Chen Y."/>
            <person name="Ge C."/>
            <person name="Yang S."/>
            <person name="Gu J."/>
        </authorList>
    </citation>
    <scope>NUCLEOTIDE SEQUENCE [LARGE SCALE MRNA] (ISOFORM 1)</scope>
</reference>
<reference key="3">
    <citation type="journal article" date="1999" name="Nature">
        <title>The DNA sequence of human chromosome 22.</title>
        <authorList>
            <person name="Dunham I."/>
            <person name="Hunt A.R."/>
            <person name="Collins J.E."/>
            <person name="Bruskiewich R."/>
            <person name="Beare D.M."/>
            <person name="Clamp M."/>
            <person name="Smink L.J."/>
            <person name="Ainscough R."/>
            <person name="Almeida J.P."/>
            <person name="Babbage A.K."/>
            <person name="Bagguley C."/>
            <person name="Bailey J."/>
            <person name="Barlow K.F."/>
            <person name="Bates K.N."/>
            <person name="Beasley O.P."/>
            <person name="Bird C.P."/>
            <person name="Blakey S.E."/>
            <person name="Bridgeman A.M."/>
            <person name="Buck D."/>
            <person name="Burgess J."/>
            <person name="Burrill W.D."/>
            <person name="Burton J."/>
            <person name="Carder C."/>
            <person name="Carter N.P."/>
            <person name="Chen Y."/>
            <person name="Clark G."/>
            <person name="Clegg S.M."/>
            <person name="Cobley V.E."/>
            <person name="Cole C.G."/>
            <person name="Collier R.E."/>
            <person name="Connor R."/>
            <person name="Conroy D."/>
            <person name="Corby N.R."/>
            <person name="Coville G.J."/>
            <person name="Cox A.V."/>
            <person name="Davis J."/>
            <person name="Dawson E."/>
            <person name="Dhami P.D."/>
            <person name="Dockree C."/>
            <person name="Dodsworth S.J."/>
            <person name="Durbin R.M."/>
            <person name="Ellington A.G."/>
            <person name="Evans K.L."/>
            <person name="Fey J.M."/>
            <person name="Fleming K."/>
            <person name="French L."/>
            <person name="Garner A.A."/>
            <person name="Gilbert J.G.R."/>
            <person name="Goward M.E."/>
            <person name="Grafham D.V."/>
            <person name="Griffiths M.N.D."/>
            <person name="Hall C."/>
            <person name="Hall R.E."/>
            <person name="Hall-Tamlyn G."/>
            <person name="Heathcott R.W."/>
            <person name="Ho S."/>
            <person name="Holmes S."/>
            <person name="Hunt S.E."/>
            <person name="Jones M.C."/>
            <person name="Kershaw J."/>
            <person name="Kimberley A.M."/>
            <person name="King A."/>
            <person name="Laird G.K."/>
            <person name="Langford C.F."/>
            <person name="Leversha M.A."/>
            <person name="Lloyd C."/>
            <person name="Lloyd D.M."/>
            <person name="Martyn I.D."/>
            <person name="Mashreghi-Mohammadi M."/>
            <person name="Matthews L.H."/>
            <person name="Mccann O.T."/>
            <person name="Mcclay J."/>
            <person name="Mclaren S."/>
            <person name="McMurray A.A."/>
            <person name="Milne S.A."/>
            <person name="Mortimore B.J."/>
            <person name="Odell C.N."/>
            <person name="Pavitt R."/>
            <person name="Pearce A.V."/>
            <person name="Pearson D."/>
            <person name="Phillimore B.J.C.T."/>
            <person name="Phillips S.H."/>
            <person name="Plumb R.W."/>
            <person name="Ramsay H."/>
            <person name="Ramsey Y."/>
            <person name="Rogers L."/>
            <person name="Ross M.T."/>
            <person name="Scott C.E."/>
            <person name="Sehra H.K."/>
            <person name="Skuce C.D."/>
            <person name="Smalley S."/>
            <person name="Smith M.L."/>
            <person name="Soderlund C."/>
            <person name="Spragon L."/>
            <person name="Steward C.A."/>
            <person name="Sulston J.E."/>
            <person name="Swann R.M."/>
            <person name="Vaudin M."/>
            <person name="Wall M."/>
            <person name="Wallis J.M."/>
            <person name="Whiteley M.N."/>
            <person name="Willey D.L."/>
            <person name="Williams L."/>
            <person name="Williams S.A."/>
            <person name="Williamson H."/>
            <person name="Wilmer T.E."/>
            <person name="Wilming L."/>
            <person name="Wright C.L."/>
            <person name="Hubbard T."/>
            <person name="Bentley D.R."/>
            <person name="Beck S."/>
            <person name="Rogers J."/>
            <person name="Shimizu N."/>
            <person name="Minoshima S."/>
            <person name="Kawasaki K."/>
            <person name="Sasaki T."/>
            <person name="Asakawa S."/>
            <person name="Kudoh J."/>
            <person name="Shintani A."/>
            <person name="Shibuya K."/>
            <person name="Yoshizaki Y."/>
            <person name="Aoki N."/>
            <person name="Mitsuyama S."/>
            <person name="Roe B.A."/>
            <person name="Chen F."/>
            <person name="Chu L."/>
            <person name="Crabtree J."/>
            <person name="Deschamps S."/>
            <person name="Do A."/>
            <person name="Do T."/>
            <person name="Dorman A."/>
            <person name="Fang F."/>
            <person name="Fu Y."/>
            <person name="Hu P."/>
            <person name="Hua A."/>
            <person name="Kenton S."/>
            <person name="Lai H."/>
            <person name="Lao H.I."/>
            <person name="Lewis J."/>
            <person name="Lewis S."/>
            <person name="Lin S.-P."/>
            <person name="Loh P."/>
            <person name="Malaj E."/>
            <person name="Nguyen T."/>
            <person name="Pan H."/>
            <person name="Phan S."/>
            <person name="Qi S."/>
            <person name="Qian Y."/>
            <person name="Ray L."/>
            <person name="Ren Q."/>
            <person name="Shaull S."/>
            <person name="Sloan D."/>
            <person name="Song L."/>
            <person name="Wang Q."/>
            <person name="Wang Y."/>
            <person name="Wang Z."/>
            <person name="White J."/>
            <person name="Willingham D."/>
            <person name="Wu H."/>
            <person name="Yao Z."/>
            <person name="Zhan M."/>
            <person name="Zhang G."/>
            <person name="Chissoe S."/>
            <person name="Murray J."/>
            <person name="Miller N."/>
            <person name="Minx P."/>
            <person name="Fulton R."/>
            <person name="Johnson D."/>
            <person name="Bemis G."/>
            <person name="Bentley D."/>
            <person name="Bradshaw H."/>
            <person name="Bourne S."/>
            <person name="Cordes M."/>
            <person name="Du Z."/>
            <person name="Fulton L."/>
            <person name="Goela D."/>
            <person name="Graves T."/>
            <person name="Hawkins J."/>
            <person name="Hinds K."/>
            <person name="Kemp K."/>
            <person name="Latreille P."/>
            <person name="Layman D."/>
            <person name="Ozersky P."/>
            <person name="Rohlfing T."/>
            <person name="Scheet P."/>
            <person name="Walker C."/>
            <person name="Wamsley A."/>
            <person name="Wohldmann P."/>
            <person name="Pepin K."/>
            <person name="Nelson J."/>
            <person name="Korf I."/>
            <person name="Bedell J.A."/>
            <person name="Hillier L.W."/>
            <person name="Mardis E."/>
            <person name="Waterston R."/>
            <person name="Wilson R."/>
            <person name="Emanuel B.S."/>
            <person name="Shaikh T."/>
            <person name="Kurahashi H."/>
            <person name="Saitta S."/>
            <person name="Budarf M.L."/>
            <person name="McDermid H.E."/>
            <person name="Johnson A."/>
            <person name="Wong A.C.C."/>
            <person name="Morrow B.E."/>
            <person name="Edelmann L."/>
            <person name="Kim U.J."/>
            <person name="Shizuya H."/>
            <person name="Simon M.I."/>
            <person name="Dumanski J.P."/>
            <person name="Peyrard M."/>
            <person name="Kedra D."/>
            <person name="Seroussi E."/>
            <person name="Fransson I."/>
            <person name="Tapia I."/>
            <person name="Bruder C.E."/>
            <person name="O'Brien K.P."/>
            <person name="Wilkinson P."/>
            <person name="Bodenteich A."/>
            <person name="Hartman K."/>
            <person name="Hu X."/>
            <person name="Khan A.S."/>
            <person name="Lane L."/>
            <person name="Tilahun Y."/>
            <person name="Wright H."/>
        </authorList>
    </citation>
    <scope>NUCLEOTIDE SEQUENCE [LARGE SCALE GENOMIC DNA]</scope>
</reference>
<reference key="4">
    <citation type="submission" date="2005-07" db="EMBL/GenBank/DDBJ databases">
        <authorList>
            <person name="Mural R.J."/>
            <person name="Istrail S."/>
            <person name="Sutton G.G."/>
            <person name="Florea L."/>
            <person name="Halpern A.L."/>
            <person name="Mobarry C.M."/>
            <person name="Lippert R."/>
            <person name="Walenz B."/>
            <person name="Shatkay H."/>
            <person name="Dew I."/>
            <person name="Miller J.R."/>
            <person name="Flanigan M.J."/>
            <person name="Edwards N.J."/>
            <person name="Bolanos R."/>
            <person name="Fasulo D."/>
            <person name="Halldorsson B.V."/>
            <person name="Hannenhalli S."/>
            <person name="Turner R."/>
            <person name="Yooseph S."/>
            <person name="Lu F."/>
            <person name="Nusskern D.R."/>
            <person name="Shue B.C."/>
            <person name="Zheng X.H."/>
            <person name="Zhong F."/>
            <person name="Delcher A.L."/>
            <person name="Huson D.H."/>
            <person name="Kravitz S.A."/>
            <person name="Mouchard L."/>
            <person name="Reinert K."/>
            <person name="Remington K.A."/>
            <person name="Clark A.G."/>
            <person name="Waterman M.S."/>
            <person name="Eichler E.E."/>
            <person name="Adams M.D."/>
            <person name="Hunkapiller M.W."/>
            <person name="Myers E.W."/>
            <person name="Venter J.C."/>
        </authorList>
    </citation>
    <scope>NUCLEOTIDE SEQUENCE [LARGE SCALE GENOMIC DNA]</scope>
</reference>
<reference key="5">
    <citation type="journal article" date="2004" name="Genome Res.">
        <title>The status, quality, and expansion of the NIH full-length cDNA project: the Mammalian Gene Collection (MGC).</title>
        <authorList>
            <consortium name="The MGC Project Team"/>
        </authorList>
    </citation>
    <scope>NUCLEOTIDE SEQUENCE [LARGE SCALE MRNA] (ISOFORM 2)</scope>
    <source>
        <tissue>Liver</tissue>
    </source>
</reference>
<reference key="6">
    <citation type="journal article" date="2005" name="Genomics">
        <title>PRR5 encodes a conserved proline-rich protein predominant in kidney: analysis of genomic organization, expression, and mutation status in breast and colorectal carcinomas.</title>
        <authorList>
            <person name="Johnstone C.N."/>
            <person name="Castellvi-Bel S."/>
            <person name="Chang L.M."/>
            <person name="Sung R.K."/>
            <person name="Bowser M.J."/>
            <person name="Pique J.M."/>
            <person name="Castells A."/>
            <person name="Rustgi A.K."/>
        </authorList>
    </citation>
    <scope>IDENTIFICATION (ISOFORMS 1; 3 AND 4)</scope>
    <scope>FUNCTION</scope>
    <scope>TISSUE SPECIFICITY</scope>
</reference>
<reference key="7">
    <citation type="journal article" date="2007" name="Biochem. J.">
        <title>Identification of Protor as a novel Rictor-binding component of mTOR complex-2.</title>
        <authorList>
            <person name="Pearce L.R."/>
            <person name="Huang X."/>
            <person name="Boudeau J."/>
            <person name="Pawlowski R."/>
            <person name="Wullschleger S."/>
            <person name="Deak M."/>
            <person name="Ibrahim A.F.M."/>
            <person name="Gourlay R."/>
            <person name="Magnuson M.A."/>
            <person name="Alessi D.R."/>
        </authorList>
    </citation>
    <scope>FUNCTION</scope>
    <scope>IDENTIFICATION IN THE TORC2 COMPLEX</scope>
    <scope>INTERACTION WITH RICTOR</scope>
</reference>
<reference key="8">
    <citation type="journal article" date="2007" name="J. Biol. Chem.">
        <title>PRR5, a novel component of mTOR complex 2, regulates platelet-derived growth factor receptor beta expression and signaling.</title>
        <authorList>
            <person name="Woo S.-Y."/>
            <person name="Kim D.-H."/>
            <person name="Jun C.-B."/>
            <person name="Kim Y.-M."/>
            <person name="Haar E.V."/>
            <person name="Lee S.-I."/>
            <person name="Hegg J.W."/>
            <person name="Bandhakavi S."/>
            <person name="Griffin T.J."/>
            <person name="Kim D.-H."/>
        </authorList>
    </citation>
    <scope>FUNCTION</scope>
    <scope>IDENTIFICATION IN THE TORC2 COMPLEX</scope>
    <scope>INTERACTION WITH MTOR AND RICTOR</scope>
    <scope>TISSUE SPECIFICITY</scope>
</reference>
<reference key="9">
    <citation type="journal article" date="2013" name="J. Proteome Res.">
        <title>Toward a comprehensive characterization of a human cancer cell phosphoproteome.</title>
        <authorList>
            <person name="Zhou H."/>
            <person name="Di Palma S."/>
            <person name="Preisinger C."/>
            <person name="Peng M."/>
            <person name="Polat A.N."/>
            <person name="Heck A.J."/>
            <person name="Mohammed S."/>
        </authorList>
    </citation>
    <scope>IDENTIFICATION BY MASS SPECTROMETRY [LARGE SCALE ANALYSIS]</scope>
    <source>
        <tissue>Erythroleukemia</tissue>
    </source>
</reference>
<reference key="10">
    <citation type="journal article" date="2014" name="J. Proteomics">
        <title>An enzyme assisted RP-RPLC approach for in-depth analysis of human liver phosphoproteome.</title>
        <authorList>
            <person name="Bian Y."/>
            <person name="Song C."/>
            <person name="Cheng K."/>
            <person name="Dong M."/>
            <person name="Wang F."/>
            <person name="Huang J."/>
            <person name="Sun D."/>
            <person name="Wang L."/>
            <person name="Ye M."/>
            <person name="Zou H."/>
        </authorList>
    </citation>
    <scope>IDENTIFICATION BY MASS SPECTROMETRY [LARGE SCALE ANALYSIS]</scope>
    <source>
        <tissue>Liver</tissue>
    </source>
</reference>
<reference key="11">
    <citation type="journal article" date="2018" name="Elife">
        <title>Architecture of the human mTORC2 core complex.</title>
        <authorList>
            <person name="Stuttfeld E."/>
            <person name="Aylett C.H."/>
            <person name="Imseng S."/>
            <person name="Boehringer D."/>
            <person name="Scaiola A."/>
            <person name="Sauer E."/>
            <person name="Hall M.N."/>
            <person name="Maier T."/>
            <person name="Ban N."/>
        </authorList>
    </citation>
    <scope>STRUCTURE BY ELECTRON MICROSCOPY OF THE MTORC2 COMPLEX</scope>
    <scope>SUBUNIT</scope>
</reference>
<accession>P85299</accession>
<accession>B1AHF6</accession>
<accession>B1AHG5</accession>
<accession>B3KP73</accession>
<accession>O75983</accession>
<accession>O95695</accession>
<accession>Q5BIW2</accession>
<accession>Q5EAJ8</accession>
<accession>Q5EAJ9</accession>
<accession>Q5XKJ6</accession>
<accession>Q96RW1</accession>
<accession>Q96RW2</accession>
<accession>Q9HA49</accession>
<accession>Q9HC46</accession>
<accession>Q9NSG0</accession>
<accession>Q9NVX8</accession>
<accession>Q9NXL1</accession>
<accession>Q9UH20</accession>
<proteinExistence type="evidence at protein level"/>
<organism>
    <name type="scientific">Homo sapiens</name>
    <name type="common">Human</name>
    <dbReference type="NCBI Taxonomy" id="9606"/>
    <lineage>
        <taxon>Eukaryota</taxon>
        <taxon>Metazoa</taxon>
        <taxon>Chordata</taxon>
        <taxon>Craniata</taxon>
        <taxon>Vertebrata</taxon>
        <taxon>Euteleostomi</taxon>
        <taxon>Mammalia</taxon>
        <taxon>Eutheria</taxon>
        <taxon>Euarchontoglires</taxon>
        <taxon>Primates</taxon>
        <taxon>Haplorrhini</taxon>
        <taxon>Catarrhini</taxon>
        <taxon>Hominidae</taxon>
        <taxon>Homo</taxon>
    </lineage>
</organism>
<keyword id="KW-0025">Alternative splicing</keyword>
<keyword id="KW-0131">Cell cycle</keyword>
<keyword id="KW-0597">Phosphoprotein</keyword>
<keyword id="KW-1267">Proteomics identification</keyword>
<keyword id="KW-1185">Reference proteome</keyword>
<keyword id="KW-0043">Tumor suppressor</keyword>
<name>PRR5_HUMAN</name>
<sequence length="388" mass="42753">MRTLRRLKFMSSPSLSDLGKREPAAAADERGTQQRRACANATWNSIHNGVIAVFQRKGLPDQELFSLNEGVRQLLKTELGSFFTEYLQNQLLTKGMVILRDKIRFYEGQKLLDSLAETWDFFFSDVLPMLQAIFYPVQGKEPSVRQLALLHFRNAITLSVKLEDALARAHARVPPAIVQMLLVLQGVHESRGVTEDYLRLETLVQKVVSPYLGTYGLHSSEGPFTHSCILEKRLLRRSRSGDVLAKNPVVRSKSYNTPLLNPVQEHEAEGAAAGGTSIRRHSVSEMTSCPEPQGFSDPPGQGPTGTFRSSPAPHSGPCPSRLYPTTQPPEQGLDPTRSSLPRSSPENLVDQILESVDSDSEGIFIDFGRGRGSGMSDLEGSGGRQSVV</sequence>
<feature type="chain" id="PRO_0000308162" description="Proline-rich protein 5">
    <location>
        <begin position="1"/>
        <end position="388"/>
    </location>
</feature>
<feature type="region of interest" description="Interaction with RICTOR">
    <location>
        <begin position="10"/>
        <end position="95"/>
    </location>
</feature>
<feature type="region of interest" description="Disordered" evidence="2">
    <location>
        <begin position="12"/>
        <end position="31"/>
    </location>
</feature>
<feature type="region of interest" description="Interaction with RICTOR">
    <location>
        <begin position="188"/>
        <end position="218"/>
    </location>
</feature>
<feature type="region of interest" description="Disordered" evidence="2">
    <location>
        <begin position="254"/>
        <end position="388"/>
    </location>
</feature>
<feature type="compositionally biased region" description="Basic and acidic residues" evidence="2">
    <location>
        <begin position="18"/>
        <end position="31"/>
    </location>
</feature>
<feature type="compositionally biased region" description="Polar residues" evidence="2">
    <location>
        <begin position="336"/>
        <end position="346"/>
    </location>
</feature>
<feature type="modified residue" description="Phosphoserine" evidence="1">
    <location>
        <position position="252"/>
    </location>
</feature>
<feature type="splice variant" id="VSP_001646" description="In isoform 2." evidence="7 8">
    <location>
        <begin position="1"/>
        <end position="101"/>
    </location>
</feature>
<feature type="splice variant" id="VSP_028884" description="In isoform 4." evidence="9">
    <location>
        <begin position="1"/>
        <end position="95"/>
    </location>
</feature>
<feature type="splice variant" id="VSP_028885" description="In isoform 3." evidence="9">
    <location>
        <begin position="1"/>
        <end position="9"/>
    </location>
</feature>
<feature type="splice variant" id="VSP_045883" description="In isoform 5." evidence="7">
    <original>MRTLR</original>
    <variation>MVCLELSQREAWGSGSPEKMPAQPEGLY</variation>
    <location>
        <begin position="1"/>
        <end position="5"/>
    </location>
</feature>
<feature type="splice variant" id="VSP_001648" description="In isoform 2." evidence="7 8">
    <original>KIRFYE</original>
    <variation>MAPMPT</variation>
    <location>
        <begin position="102"/>
        <end position="107"/>
    </location>
</feature>
<feature type="sequence variant" id="VAR_062230" description="In dbSNP:rs36082900.">
    <original>V</original>
    <variation>M</variation>
    <location>
        <position position="243"/>
    </location>
</feature>
<feature type="sequence conflict" description="In Ref. 1; BAA90999." evidence="9" ref="1">
    <original>R</original>
    <variation>W</variation>
    <location>
        <position position="280"/>
    </location>
</feature>